<feature type="chain" id="PRO_0000184667" description="Uncharacterized ATP-binding protein MJ0147">
    <location>
        <begin position="1"/>
        <end position="371"/>
    </location>
</feature>
<feature type="binding site" evidence="1">
    <location>
        <begin position="33"/>
        <end position="40"/>
    </location>
    <ligand>
        <name>ATP</name>
        <dbReference type="ChEBI" id="CHEBI:30616"/>
    </ligand>
</feature>
<organism>
    <name type="scientific">Methanocaldococcus jannaschii (strain ATCC 43067 / DSM 2661 / JAL-1 / JCM 10045 / NBRC 100440)</name>
    <name type="common">Methanococcus jannaschii</name>
    <dbReference type="NCBI Taxonomy" id="243232"/>
    <lineage>
        <taxon>Archaea</taxon>
        <taxon>Methanobacteriati</taxon>
        <taxon>Methanobacteriota</taxon>
        <taxon>Methanomada group</taxon>
        <taxon>Methanococci</taxon>
        <taxon>Methanococcales</taxon>
        <taxon>Methanocaldococcaceae</taxon>
        <taxon>Methanocaldococcus</taxon>
    </lineage>
</organism>
<evidence type="ECO:0000255" key="1"/>
<evidence type="ECO:0000305" key="2"/>
<protein>
    <recommendedName>
        <fullName>Uncharacterized ATP-binding protein MJ0147</fullName>
    </recommendedName>
</protein>
<gene>
    <name type="ordered locus">MJ0147</name>
</gene>
<dbReference type="EMBL" id="L77117">
    <property type="protein sequence ID" value="AAB98139.1"/>
    <property type="molecule type" value="Genomic_DNA"/>
</dbReference>
<dbReference type="PIR" id="D64318">
    <property type="entry name" value="D64318"/>
</dbReference>
<dbReference type="SMR" id="Q57611"/>
<dbReference type="STRING" id="243232.MJ_0147"/>
<dbReference type="PaxDb" id="243232-MJ_0147"/>
<dbReference type="DNASU" id="1450991"/>
<dbReference type="EnsemblBacteria" id="AAB98139">
    <property type="protein sequence ID" value="AAB98139"/>
    <property type="gene ID" value="MJ_0147"/>
</dbReference>
<dbReference type="KEGG" id="mja:MJ_0147"/>
<dbReference type="eggNOG" id="arCOG03407">
    <property type="taxonomic scope" value="Archaea"/>
</dbReference>
<dbReference type="HOGENOM" id="CLU_068608_0_0_2"/>
<dbReference type="InParanoid" id="Q57611"/>
<dbReference type="PhylomeDB" id="Q57611"/>
<dbReference type="Proteomes" id="UP000000805">
    <property type="component" value="Chromosome"/>
</dbReference>
<dbReference type="GO" id="GO:0005524">
    <property type="term" value="F:ATP binding"/>
    <property type="evidence" value="ECO:0007669"/>
    <property type="project" value="UniProtKB-KW"/>
</dbReference>
<dbReference type="Gene3D" id="3.40.50.300">
    <property type="entry name" value="P-loop containing nucleotide triphosphate hydrolases"/>
    <property type="match status" value="1"/>
</dbReference>
<dbReference type="Gene3D" id="1.10.10.10">
    <property type="entry name" value="Winged helix-like DNA-binding domain superfamily/Winged helix DNA-binding domain"/>
    <property type="match status" value="1"/>
</dbReference>
<dbReference type="InterPro" id="IPR051667">
    <property type="entry name" value="Archaeal_ATPase_domain"/>
</dbReference>
<dbReference type="InterPro" id="IPR011579">
    <property type="entry name" value="ATPase_dom"/>
</dbReference>
<dbReference type="InterPro" id="IPR049081">
    <property type="entry name" value="MJ1010-like_2nd"/>
</dbReference>
<dbReference type="InterPro" id="IPR027417">
    <property type="entry name" value="P-loop_NTPase"/>
</dbReference>
<dbReference type="InterPro" id="IPR036388">
    <property type="entry name" value="WH-like_DNA-bd_sf"/>
</dbReference>
<dbReference type="PANTHER" id="PTHR37096:SF1">
    <property type="entry name" value="AAA+ ATPASE DOMAIN-CONTAINING PROTEIN"/>
    <property type="match status" value="1"/>
</dbReference>
<dbReference type="PANTHER" id="PTHR37096">
    <property type="entry name" value="YALI0E33429P"/>
    <property type="match status" value="1"/>
</dbReference>
<dbReference type="Pfam" id="PF01637">
    <property type="entry name" value="ATPase_2"/>
    <property type="match status" value="1"/>
</dbReference>
<dbReference type="Pfam" id="PF21690">
    <property type="entry name" value="MJ1010-like_2nd"/>
    <property type="match status" value="1"/>
</dbReference>
<dbReference type="SUPFAM" id="SSF52540">
    <property type="entry name" value="P-loop containing nucleoside triphosphate hydrolases"/>
    <property type="match status" value="1"/>
</dbReference>
<reference key="1">
    <citation type="journal article" date="1996" name="Science">
        <title>Complete genome sequence of the methanogenic archaeon, Methanococcus jannaschii.</title>
        <authorList>
            <person name="Bult C.J."/>
            <person name="White O."/>
            <person name="Olsen G.J."/>
            <person name="Zhou L."/>
            <person name="Fleischmann R.D."/>
            <person name="Sutton G.G."/>
            <person name="Blake J.A."/>
            <person name="FitzGerald L.M."/>
            <person name="Clayton R.A."/>
            <person name="Gocayne J.D."/>
            <person name="Kerlavage A.R."/>
            <person name="Dougherty B.A."/>
            <person name="Tomb J.-F."/>
            <person name="Adams M.D."/>
            <person name="Reich C.I."/>
            <person name="Overbeek R."/>
            <person name="Kirkness E.F."/>
            <person name="Weinstock K.G."/>
            <person name="Merrick J.M."/>
            <person name="Glodek A."/>
            <person name="Scott J.L."/>
            <person name="Geoghagen N.S.M."/>
            <person name="Weidman J.F."/>
            <person name="Fuhrmann J.L."/>
            <person name="Nguyen D."/>
            <person name="Utterback T.R."/>
            <person name="Kelley J.M."/>
            <person name="Peterson J.D."/>
            <person name="Sadow P.W."/>
            <person name="Hanna M.C."/>
            <person name="Cotton M.D."/>
            <person name="Roberts K.M."/>
            <person name="Hurst M.A."/>
            <person name="Kaine B.P."/>
            <person name="Borodovsky M."/>
            <person name="Klenk H.-P."/>
            <person name="Fraser C.M."/>
            <person name="Smith H.O."/>
            <person name="Woese C.R."/>
            <person name="Venter J.C."/>
        </authorList>
    </citation>
    <scope>NUCLEOTIDE SEQUENCE [LARGE SCALE GENOMIC DNA]</scope>
    <source>
        <strain>ATCC 43067 / DSM 2661 / JAL-1 / JCM 10045 / NBRC 100440</strain>
    </source>
</reference>
<reference key="2">
    <citation type="journal article" date="1997" name="Science">
        <title>Evidence for a family of archaeal ATPases.</title>
        <authorList>
            <person name="Koonin E.V."/>
        </authorList>
    </citation>
    <scope>SIMILARITY</scope>
</reference>
<name>Y147_METJA</name>
<proteinExistence type="inferred from homology"/>
<accession>Q57611</accession>
<sequence>MVIQMKFFNREKEIHEILSILEGEPNIIYFIYGPLNSGKTALIKHIIENKLSDDYKVFYINFRTYLISEKREFIEAIFTTKKDDFFEKIKDKSEVLNLITKGAKILTGIPIPEVEFDKLFEEKINDAFQYLNSILLEVKKSGKQPVLILDELQMIKDVVLNWQKYLLKELFQFLVSLTKEQHLCHVFCLSSDSLFIEYVYSAGELEGRAKYLLVDDFDKETALKFMDFLAKEILNKKLSDEDKELIYNYVGGKPVYIYSVIDEMRYRKLEDILNLMLKEETQKLKYFLKELDYIKPKVELKDEIIEIKKDDIINALKLFKENYEVSDDDIPEPVYIYLVKKNILFLNPIEGILKPQSFLIWNAIKKLLNGH</sequence>
<comment type="similarity">
    <text evidence="2">Belongs to the archaeal ATPase family.</text>
</comment>
<keyword id="KW-0067">ATP-binding</keyword>
<keyword id="KW-0547">Nucleotide-binding</keyword>
<keyword id="KW-1185">Reference proteome</keyword>